<reference key="1">
    <citation type="journal article" date="1996" name="J. Biol. Chem.">
        <title>Expression of the chlI, chlD, and chlH genes from the Cyanobacterium synechocystis PCC6803 in Escherichia coli and demonstration that the three cognate proteins are required for magnesium-protoporphyrin chelatase activity.</title>
        <authorList>
            <person name="Jensen P.E."/>
            <person name="Gibson L.C.D."/>
            <person name="Henningsen K.W."/>
            <person name="Hunter C.N."/>
        </authorList>
    </citation>
    <scope>NUCLEOTIDE SEQUENCE [GENOMIC DNA]</scope>
</reference>
<reference key="2">
    <citation type="journal article" date="1996" name="DNA Res.">
        <title>Sequence analysis of the genome of the unicellular cyanobacterium Synechocystis sp. strain PCC6803. II. Sequence determination of the entire genome and assignment of potential protein-coding regions.</title>
        <authorList>
            <person name="Kaneko T."/>
            <person name="Sato S."/>
            <person name="Kotani H."/>
            <person name="Tanaka A."/>
            <person name="Asamizu E."/>
            <person name="Nakamura Y."/>
            <person name="Miyajima N."/>
            <person name="Hirosawa M."/>
            <person name="Sugiura M."/>
            <person name="Sasamoto S."/>
            <person name="Kimura T."/>
            <person name="Hosouchi T."/>
            <person name="Matsuno A."/>
            <person name="Muraki A."/>
            <person name="Nakazaki N."/>
            <person name="Naruo K."/>
            <person name="Okumura S."/>
            <person name="Shimpo S."/>
            <person name="Takeuchi C."/>
            <person name="Wada T."/>
            <person name="Watanabe A."/>
            <person name="Yamada M."/>
            <person name="Yasuda M."/>
            <person name="Tabata S."/>
        </authorList>
    </citation>
    <scope>NUCLEOTIDE SEQUENCE [LARGE SCALE GENOMIC DNA]</scope>
    <source>
        <strain>ATCC 27184 / PCC 6803 / Kazusa</strain>
    </source>
</reference>
<sequence>MTTLTPFIPLNFPITAIVGQEAIKLALLLGAIDPGLGGIVIAGRRGTAKSVMARAIHTLLPPIEIIKGNRYQCDPKNPGSWDDDTLEKFADVPLDQLETQVIPAPFIQIPLGVTEDRLLGSVDVEKSVKQGEAVFQPGLLAQAHRGVLYIDELNLLDDQIANQLLTVLTEGKNQIEREGMSFQHPCQPLLIATYNPEEGPLRRHLLDRIAIALSADGILGLDQRVAAVDQVLAYADSPISFIDQYDAELDDLKTTIILAREWLKEVSLTPEQVSYLVEEAIRGGLQGHRGELFAMRVAKAIAALDGRSDVQADDLRQAVELVIVPRSVLMDNPPPPEQAPPPPPPPQNQDEGKDEQEDQQDDKEDDKDNEPEAEQDPPSIPEEFIFDPEGVSLDPSVLYFAQMAQKQGKSGSRSVIFSDDRGRYLKPILPKGKVRRIAVDATLRAASPYQKSRRLRHPDRQVIVEQGDIRGKKLVRKAGALIVFLVDASGSMALNRMQAAKGAVMQLLTEAYENRDQVSLIPFQGENAEVLLPPTRSIAMAKKRLETLPCGGGSPLSHGLMQAVNVGMNAKRSGDIGQVVIVAITDGRGNIPLARSLGDEIPEGEKPDIKAELLEIAAKIRGLGMQLLVINTEKKFVSTGFGKELAQKAGGKYYQLPKATDQGIASMARQAIADMQ</sequence>
<accession>P72772</accession>
<accession>Q55100</accession>
<comment type="function">
    <text>Involved in chlorophyll biosynthesis; introduces a magnesium ion into protoporphyrin IX to yield Mg-protoporphyrin IX.</text>
</comment>
<comment type="catalytic activity">
    <reaction>
        <text>protoporphyrin IX + Mg(2+) + ATP + H2O = Mg-protoporphyrin IX + ADP + phosphate + 3 H(+)</text>
        <dbReference type="Rhea" id="RHEA:13961"/>
        <dbReference type="ChEBI" id="CHEBI:15377"/>
        <dbReference type="ChEBI" id="CHEBI:15378"/>
        <dbReference type="ChEBI" id="CHEBI:18420"/>
        <dbReference type="ChEBI" id="CHEBI:30616"/>
        <dbReference type="ChEBI" id="CHEBI:43474"/>
        <dbReference type="ChEBI" id="CHEBI:57306"/>
        <dbReference type="ChEBI" id="CHEBI:60492"/>
        <dbReference type="ChEBI" id="CHEBI:456216"/>
        <dbReference type="EC" id="6.6.1.1"/>
    </reaction>
</comment>
<comment type="pathway">
    <text>Porphyrin-containing compound metabolism; chlorophyll biosynthesis.</text>
</comment>
<comment type="similarity">
    <text evidence="3">Belongs to the Mg-chelatase subunits D/I family.</text>
</comment>
<name>CHLD_SYNY3</name>
<proteinExistence type="inferred from homology"/>
<gene>
    <name type="primary">chlD</name>
    <name type="ordered locus">slr1777</name>
</gene>
<dbReference type="EC" id="6.6.1.1"/>
<dbReference type="EMBL" id="X96599">
    <property type="protein sequence ID" value="CAA65418.1"/>
    <property type="molecule type" value="Genomic_DNA"/>
</dbReference>
<dbReference type="EMBL" id="BA000022">
    <property type="protein sequence ID" value="BAA16787.1"/>
    <property type="molecule type" value="Genomic_DNA"/>
</dbReference>
<dbReference type="PIR" id="S74635">
    <property type="entry name" value="S74635"/>
</dbReference>
<dbReference type="PIR" id="T46870">
    <property type="entry name" value="T46870"/>
</dbReference>
<dbReference type="SMR" id="P72772"/>
<dbReference type="IntAct" id="P72772">
    <property type="interactions" value="5"/>
</dbReference>
<dbReference type="STRING" id="1148.gene:10497643"/>
<dbReference type="PaxDb" id="1148-1651860"/>
<dbReference type="EnsemblBacteria" id="BAA16787">
    <property type="protein sequence ID" value="BAA16787"/>
    <property type="gene ID" value="BAA16787"/>
</dbReference>
<dbReference type="KEGG" id="syn:slr1777"/>
<dbReference type="eggNOG" id="COG1239">
    <property type="taxonomic scope" value="Bacteria"/>
</dbReference>
<dbReference type="eggNOG" id="COG1240">
    <property type="taxonomic scope" value="Bacteria"/>
</dbReference>
<dbReference type="InParanoid" id="P72772"/>
<dbReference type="PhylomeDB" id="P72772"/>
<dbReference type="SABIO-RK" id="P72772"/>
<dbReference type="UniPathway" id="UPA00668"/>
<dbReference type="Proteomes" id="UP000001425">
    <property type="component" value="Chromosome"/>
</dbReference>
<dbReference type="GO" id="GO:0005524">
    <property type="term" value="F:ATP binding"/>
    <property type="evidence" value="ECO:0007669"/>
    <property type="project" value="UniProtKB-KW"/>
</dbReference>
<dbReference type="GO" id="GO:0016887">
    <property type="term" value="F:ATP hydrolysis activity"/>
    <property type="evidence" value="ECO:0007669"/>
    <property type="project" value="InterPro"/>
</dbReference>
<dbReference type="GO" id="GO:0016851">
    <property type="term" value="F:magnesium chelatase activity"/>
    <property type="evidence" value="ECO:0007669"/>
    <property type="project" value="UniProtKB-EC"/>
</dbReference>
<dbReference type="GO" id="GO:0015995">
    <property type="term" value="P:chlorophyll biosynthetic process"/>
    <property type="evidence" value="ECO:0007669"/>
    <property type="project" value="UniProtKB-UniPathway"/>
</dbReference>
<dbReference type="GO" id="GO:0015979">
    <property type="term" value="P:photosynthesis"/>
    <property type="evidence" value="ECO:0007669"/>
    <property type="project" value="UniProtKB-KW"/>
</dbReference>
<dbReference type="CDD" id="cd00009">
    <property type="entry name" value="AAA"/>
    <property type="match status" value="1"/>
</dbReference>
<dbReference type="CDD" id="cd01451">
    <property type="entry name" value="vWA_Magnesium_chelatase"/>
    <property type="match status" value="1"/>
</dbReference>
<dbReference type="Gene3D" id="1.10.8.80">
    <property type="entry name" value="Magnesium chelatase subunit I, C-Terminal domain"/>
    <property type="match status" value="1"/>
</dbReference>
<dbReference type="Gene3D" id="3.40.50.300">
    <property type="entry name" value="P-loop containing nucleotide triphosphate hydrolases"/>
    <property type="match status" value="1"/>
</dbReference>
<dbReference type="Gene3D" id="3.40.50.410">
    <property type="entry name" value="von Willebrand factor, type A domain"/>
    <property type="match status" value="1"/>
</dbReference>
<dbReference type="InterPro" id="IPR003593">
    <property type="entry name" value="AAA+_ATPase"/>
</dbReference>
<dbReference type="InterPro" id="IPR041702">
    <property type="entry name" value="BchD/ChlD_VWA"/>
</dbReference>
<dbReference type="InterPro" id="IPR041628">
    <property type="entry name" value="ChlI/MoxR_AAA_lid"/>
</dbReference>
<dbReference type="InterPro" id="IPR011776">
    <property type="entry name" value="Mg_chelatase_ATPase-dsu"/>
</dbReference>
<dbReference type="InterPro" id="IPR000523">
    <property type="entry name" value="Mg_chelatse_chII-like_cat_dom"/>
</dbReference>
<dbReference type="InterPro" id="IPR027417">
    <property type="entry name" value="P-loop_NTPase"/>
</dbReference>
<dbReference type="InterPro" id="IPR002035">
    <property type="entry name" value="VWF_A"/>
</dbReference>
<dbReference type="InterPro" id="IPR036465">
    <property type="entry name" value="vWFA_dom_sf"/>
</dbReference>
<dbReference type="NCBIfam" id="TIGR02031">
    <property type="entry name" value="BchD-ChlD"/>
    <property type="match status" value="1"/>
</dbReference>
<dbReference type="PANTHER" id="PTHR43473">
    <property type="entry name" value="MAGNESIUM-CHELATASE SUBUNIT CHLD, CHLOROPLASTIC"/>
    <property type="match status" value="1"/>
</dbReference>
<dbReference type="PANTHER" id="PTHR43473:SF2">
    <property type="entry name" value="MAGNESIUM-CHELATASE SUBUNIT CHLD, CHLOROPLASTIC"/>
    <property type="match status" value="1"/>
</dbReference>
<dbReference type="Pfam" id="PF17863">
    <property type="entry name" value="AAA_lid_2"/>
    <property type="match status" value="1"/>
</dbReference>
<dbReference type="Pfam" id="PF01078">
    <property type="entry name" value="Mg_chelatase"/>
    <property type="match status" value="1"/>
</dbReference>
<dbReference type="Pfam" id="PF13519">
    <property type="entry name" value="VWA_2"/>
    <property type="match status" value="1"/>
</dbReference>
<dbReference type="SMART" id="SM00382">
    <property type="entry name" value="AAA"/>
    <property type="match status" value="1"/>
</dbReference>
<dbReference type="SMART" id="SM00327">
    <property type="entry name" value="VWA"/>
    <property type="match status" value="1"/>
</dbReference>
<dbReference type="SUPFAM" id="SSF52540">
    <property type="entry name" value="P-loop containing nucleoside triphosphate hydrolases"/>
    <property type="match status" value="1"/>
</dbReference>
<dbReference type="SUPFAM" id="SSF53300">
    <property type="entry name" value="vWA-like"/>
    <property type="match status" value="1"/>
</dbReference>
<dbReference type="PROSITE" id="PS50234">
    <property type="entry name" value="VWFA"/>
    <property type="match status" value="1"/>
</dbReference>
<evidence type="ECO:0000255" key="1">
    <source>
        <dbReference type="PROSITE-ProRule" id="PRU00219"/>
    </source>
</evidence>
<evidence type="ECO:0000256" key="2">
    <source>
        <dbReference type="SAM" id="MobiDB-lite"/>
    </source>
</evidence>
<evidence type="ECO:0000305" key="3"/>
<protein>
    <recommendedName>
        <fullName>Magnesium-chelatase subunit ChlD</fullName>
        <shortName>Mg-chelatase subunit D</shortName>
        <ecNumber>6.6.1.1</ecNumber>
    </recommendedName>
    <alternativeName>
        <fullName>Mg-protoporphyrin IX chelatase</fullName>
    </alternativeName>
</protein>
<feature type="chain" id="PRO_0000206854" description="Magnesium-chelatase subunit ChlD">
    <location>
        <begin position="1"/>
        <end position="676"/>
    </location>
</feature>
<feature type="domain" description="VWFA" evidence="1">
    <location>
        <begin position="481"/>
        <end position="672"/>
    </location>
</feature>
<feature type="region of interest" description="Disordered" evidence="2">
    <location>
        <begin position="328"/>
        <end position="387"/>
    </location>
</feature>
<feature type="compositionally biased region" description="Pro residues" evidence="2">
    <location>
        <begin position="332"/>
        <end position="347"/>
    </location>
</feature>
<feature type="compositionally biased region" description="Acidic residues" evidence="2">
    <location>
        <begin position="352"/>
        <end position="375"/>
    </location>
</feature>
<feature type="sequence conflict" description="In Ref. 1; CAA65418." evidence="3" ref="1">
    <original>A</original>
    <variation>P</variation>
    <location>
        <position position="302"/>
    </location>
</feature>
<organism>
    <name type="scientific">Synechocystis sp. (strain ATCC 27184 / PCC 6803 / Kazusa)</name>
    <dbReference type="NCBI Taxonomy" id="1111708"/>
    <lineage>
        <taxon>Bacteria</taxon>
        <taxon>Bacillati</taxon>
        <taxon>Cyanobacteriota</taxon>
        <taxon>Cyanophyceae</taxon>
        <taxon>Synechococcales</taxon>
        <taxon>Merismopediaceae</taxon>
        <taxon>Synechocystis</taxon>
    </lineage>
</organism>
<keyword id="KW-0067">ATP-binding</keyword>
<keyword id="KW-0149">Chlorophyll biosynthesis</keyword>
<keyword id="KW-0436">Ligase</keyword>
<keyword id="KW-0547">Nucleotide-binding</keyword>
<keyword id="KW-0602">Photosynthesis</keyword>
<keyword id="KW-1185">Reference proteome</keyword>